<dbReference type="EC" id="2.4.2.18" evidence="1"/>
<dbReference type="EMBL" id="CP000569">
    <property type="protein sequence ID" value="ABN74253.1"/>
    <property type="molecule type" value="Genomic_DNA"/>
</dbReference>
<dbReference type="RefSeq" id="WP_009874780.1">
    <property type="nucleotide sequence ID" value="NC_009053.1"/>
</dbReference>
<dbReference type="SMR" id="A3N1G7"/>
<dbReference type="STRING" id="416269.APL_1165"/>
<dbReference type="EnsemblBacteria" id="ABN74253">
    <property type="protein sequence ID" value="ABN74253"/>
    <property type="gene ID" value="APL_1165"/>
</dbReference>
<dbReference type="KEGG" id="apl:APL_1165"/>
<dbReference type="PATRIC" id="fig|416269.6.peg.1215"/>
<dbReference type="eggNOG" id="COG0547">
    <property type="taxonomic scope" value="Bacteria"/>
</dbReference>
<dbReference type="HOGENOM" id="CLU_034315_3_0_6"/>
<dbReference type="UniPathway" id="UPA00035">
    <property type="reaction ID" value="UER00041"/>
</dbReference>
<dbReference type="Proteomes" id="UP000001432">
    <property type="component" value="Chromosome"/>
</dbReference>
<dbReference type="GO" id="GO:0005829">
    <property type="term" value="C:cytosol"/>
    <property type="evidence" value="ECO:0007669"/>
    <property type="project" value="TreeGrafter"/>
</dbReference>
<dbReference type="GO" id="GO:0004048">
    <property type="term" value="F:anthranilate phosphoribosyltransferase activity"/>
    <property type="evidence" value="ECO:0007669"/>
    <property type="project" value="UniProtKB-UniRule"/>
</dbReference>
<dbReference type="GO" id="GO:0000287">
    <property type="term" value="F:magnesium ion binding"/>
    <property type="evidence" value="ECO:0007669"/>
    <property type="project" value="UniProtKB-UniRule"/>
</dbReference>
<dbReference type="GO" id="GO:0000162">
    <property type="term" value="P:L-tryptophan biosynthetic process"/>
    <property type="evidence" value="ECO:0007669"/>
    <property type="project" value="UniProtKB-UniRule"/>
</dbReference>
<dbReference type="FunFam" id="3.40.1030.10:FF:000002">
    <property type="entry name" value="Anthranilate phosphoribosyltransferase"/>
    <property type="match status" value="1"/>
</dbReference>
<dbReference type="Gene3D" id="3.40.1030.10">
    <property type="entry name" value="Nucleoside phosphorylase/phosphoribosyltransferase catalytic domain"/>
    <property type="match status" value="1"/>
</dbReference>
<dbReference type="Gene3D" id="1.20.970.10">
    <property type="entry name" value="Transferase, Pyrimidine Nucleoside Phosphorylase, Chain C"/>
    <property type="match status" value="1"/>
</dbReference>
<dbReference type="HAMAP" id="MF_00211">
    <property type="entry name" value="TrpD"/>
    <property type="match status" value="1"/>
</dbReference>
<dbReference type="InterPro" id="IPR005940">
    <property type="entry name" value="Anthranilate_Pribosyl_Tfrase"/>
</dbReference>
<dbReference type="InterPro" id="IPR000312">
    <property type="entry name" value="Glycosyl_Trfase_fam3"/>
</dbReference>
<dbReference type="InterPro" id="IPR017459">
    <property type="entry name" value="Glycosyl_Trfase_fam3_N_dom"/>
</dbReference>
<dbReference type="InterPro" id="IPR036320">
    <property type="entry name" value="Glycosyl_Trfase_fam3_N_dom_sf"/>
</dbReference>
<dbReference type="InterPro" id="IPR035902">
    <property type="entry name" value="Nuc_phospho_transferase"/>
</dbReference>
<dbReference type="NCBIfam" id="TIGR01245">
    <property type="entry name" value="trpD"/>
    <property type="match status" value="1"/>
</dbReference>
<dbReference type="PANTHER" id="PTHR43285">
    <property type="entry name" value="ANTHRANILATE PHOSPHORIBOSYLTRANSFERASE"/>
    <property type="match status" value="1"/>
</dbReference>
<dbReference type="PANTHER" id="PTHR43285:SF2">
    <property type="entry name" value="ANTHRANILATE PHOSPHORIBOSYLTRANSFERASE"/>
    <property type="match status" value="1"/>
</dbReference>
<dbReference type="Pfam" id="PF02885">
    <property type="entry name" value="Glycos_trans_3N"/>
    <property type="match status" value="1"/>
</dbReference>
<dbReference type="Pfam" id="PF00591">
    <property type="entry name" value="Glycos_transf_3"/>
    <property type="match status" value="1"/>
</dbReference>
<dbReference type="SUPFAM" id="SSF52418">
    <property type="entry name" value="Nucleoside phosphorylase/phosphoribosyltransferase catalytic domain"/>
    <property type="match status" value="1"/>
</dbReference>
<dbReference type="SUPFAM" id="SSF47648">
    <property type="entry name" value="Nucleoside phosphorylase/phosphoribosyltransferase N-terminal domain"/>
    <property type="match status" value="1"/>
</dbReference>
<reference key="1">
    <citation type="journal article" date="2008" name="J. Bacteriol.">
        <title>The complete genome sequence of Actinobacillus pleuropneumoniae L20 (serotype 5b).</title>
        <authorList>
            <person name="Foote S.J."/>
            <person name="Bosse J.T."/>
            <person name="Bouevitch A.B."/>
            <person name="Langford P.R."/>
            <person name="Young N.M."/>
            <person name="Nash J.H.E."/>
        </authorList>
    </citation>
    <scope>NUCLEOTIDE SEQUENCE [LARGE SCALE GENOMIC DNA]</scope>
    <source>
        <strain>L20</strain>
    </source>
</reference>
<sequence length="334" mass="36243">MQLDNILSQLFENQALTKAESQYFFEQVIQGNVSNEQLAGALIALKVRGETIEEIAGAVEAAFANATTFPTPDYDFADIVGTGGDGQNTINISTASAIVAATLGYKVAKHGSRSVSSKTGASDVLSALGINVAISPQTARQALDENNLCFLFAPLYHAGFKHAVPVRQTLKTRTLFNILGPLVNPAHAKRQLLGVYSPEVLKIYAETVRTLNHQHSIVVYGSGLDEVAVHGETLVAEIEDDKIHYFSLIPEDFGVQRHSIEALRGGEPTENAEKITVLLQGKGEAAHIDAVAVNTAMLMRTFGERNLKANVQRVKDLLRTDKAYQTLQKLAQYQ</sequence>
<comment type="function">
    <text evidence="1">Catalyzes the transfer of the phosphoribosyl group of 5-phosphorylribose-1-pyrophosphate (PRPP) to anthranilate to yield N-(5'-phosphoribosyl)-anthranilate (PRA).</text>
</comment>
<comment type="catalytic activity">
    <reaction evidence="1">
        <text>N-(5-phospho-beta-D-ribosyl)anthranilate + diphosphate = 5-phospho-alpha-D-ribose 1-diphosphate + anthranilate</text>
        <dbReference type="Rhea" id="RHEA:11768"/>
        <dbReference type="ChEBI" id="CHEBI:16567"/>
        <dbReference type="ChEBI" id="CHEBI:18277"/>
        <dbReference type="ChEBI" id="CHEBI:33019"/>
        <dbReference type="ChEBI" id="CHEBI:58017"/>
        <dbReference type="EC" id="2.4.2.18"/>
    </reaction>
</comment>
<comment type="cofactor">
    <cofactor evidence="1">
        <name>Mg(2+)</name>
        <dbReference type="ChEBI" id="CHEBI:18420"/>
    </cofactor>
    <text evidence="1">Binds 2 magnesium ions per monomer.</text>
</comment>
<comment type="pathway">
    <text evidence="1">Amino-acid biosynthesis; L-tryptophan biosynthesis; L-tryptophan from chorismate: step 2/5.</text>
</comment>
<comment type="subunit">
    <text evidence="1">Homodimer.</text>
</comment>
<comment type="similarity">
    <text evidence="1">Belongs to the anthranilate phosphoribosyltransferase family.</text>
</comment>
<name>TRPD_ACTP2</name>
<organism>
    <name type="scientific">Actinobacillus pleuropneumoniae serotype 5b (strain L20)</name>
    <dbReference type="NCBI Taxonomy" id="416269"/>
    <lineage>
        <taxon>Bacteria</taxon>
        <taxon>Pseudomonadati</taxon>
        <taxon>Pseudomonadota</taxon>
        <taxon>Gammaproteobacteria</taxon>
        <taxon>Pasteurellales</taxon>
        <taxon>Pasteurellaceae</taxon>
        <taxon>Actinobacillus</taxon>
    </lineage>
</organism>
<protein>
    <recommendedName>
        <fullName evidence="1">Anthranilate phosphoribosyltransferase</fullName>
        <ecNumber evidence="1">2.4.2.18</ecNumber>
    </recommendedName>
</protein>
<evidence type="ECO:0000255" key="1">
    <source>
        <dbReference type="HAMAP-Rule" id="MF_00211"/>
    </source>
</evidence>
<gene>
    <name evidence="1" type="primary">trpD</name>
    <name type="ordered locus">APL_1165</name>
</gene>
<feature type="chain" id="PRO_1000042982" description="Anthranilate phosphoribosyltransferase">
    <location>
        <begin position="1"/>
        <end position="334"/>
    </location>
</feature>
<feature type="binding site" evidence="1">
    <location>
        <position position="81"/>
    </location>
    <ligand>
        <name>5-phospho-alpha-D-ribose 1-diphosphate</name>
        <dbReference type="ChEBI" id="CHEBI:58017"/>
    </ligand>
</feature>
<feature type="binding site" evidence="1">
    <location>
        <position position="81"/>
    </location>
    <ligand>
        <name>anthranilate</name>
        <dbReference type="ChEBI" id="CHEBI:16567"/>
        <label>1</label>
    </ligand>
</feature>
<feature type="binding site" evidence="1">
    <location>
        <begin position="84"/>
        <end position="85"/>
    </location>
    <ligand>
        <name>5-phospho-alpha-D-ribose 1-diphosphate</name>
        <dbReference type="ChEBI" id="CHEBI:58017"/>
    </ligand>
</feature>
<feature type="binding site" evidence="1">
    <location>
        <position position="89"/>
    </location>
    <ligand>
        <name>5-phospho-alpha-D-ribose 1-diphosphate</name>
        <dbReference type="ChEBI" id="CHEBI:58017"/>
    </ligand>
</feature>
<feature type="binding site" evidence="1">
    <location>
        <begin position="91"/>
        <end position="94"/>
    </location>
    <ligand>
        <name>5-phospho-alpha-D-ribose 1-diphosphate</name>
        <dbReference type="ChEBI" id="CHEBI:58017"/>
    </ligand>
</feature>
<feature type="binding site" evidence="1">
    <location>
        <position position="93"/>
    </location>
    <ligand>
        <name>Mg(2+)</name>
        <dbReference type="ChEBI" id="CHEBI:18420"/>
        <label>1</label>
    </ligand>
</feature>
<feature type="binding site" evidence="1">
    <location>
        <begin position="109"/>
        <end position="117"/>
    </location>
    <ligand>
        <name>5-phospho-alpha-D-ribose 1-diphosphate</name>
        <dbReference type="ChEBI" id="CHEBI:58017"/>
    </ligand>
</feature>
<feature type="binding site" evidence="1">
    <location>
        <position position="121"/>
    </location>
    <ligand>
        <name>5-phospho-alpha-D-ribose 1-diphosphate</name>
        <dbReference type="ChEBI" id="CHEBI:58017"/>
    </ligand>
</feature>
<feature type="binding site" evidence="1">
    <location>
        <position position="167"/>
    </location>
    <ligand>
        <name>anthranilate</name>
        <dbReference type="ChEBI" id="CHEBI:16567"/>
        <label>2</label>
    </ligand>
</feature>
<feature type="binding site" evidence="1">
    <location>
        <position position="225"/>
    </location>
    <ligand>
        <name>Mg(2+)</name>
        <dbReference type="ChEBI" id="CHEBI:18420"/>
        <label>2</label>
    </ligand>
</feature>
<feature type="binding site" evidence="1">
    <location>
        <position position="226"/>
    </location>
    <ligand>
        <name>Mg(2+)</name>
        <dbReference type="ChEBI" id="CHEBI:18420"/>
        <label>1</label>
    </ligand>
</feature>
<feature type="binding site" evidence="1">
    <location>
        <position position="226"/>
    </location>
    <ligand>
        <name>Mg(2+)</name>
        <dbReference type="ChEBI" id="CHEBI:18420"/>
        <label>2</label>
    </ligand>
</feature>
<accession>A3N1G7</accession>
<proteinExistence type="inferred from homology"/>
<keyword id="KW-0028">Amino-acid biosynthesis</keyword>
<keyword id="KW-0057">Aromatic amino acid biosynthesis</keyword>
<keyword id="KW-0328">Glycosyltransferase</keyword>
<keyword id="KW-0460">Magnesium</keyword>
<keyword id="KW-0479">Metal-binding</keyword>
<keyword id="KW-1185">Reference proteome</keyword>
<keyword id="KW-0808">Transferase</keyword>
<keyword id="KW-0822">Tryptophan biosynthesis</keyword>